<gene>
    <name type="primary">gcvH4</name>
    <name type="synonym">gcvH</name>
    <name type="ORF">DDB_G0287795</name>
</gene>
<comment type="similarity">
    <text evidence="3">Belongs to the GcvH family.</text>
</comment>
<comment type="caution">
    <text evidence="3">Glu-119 is present instead of the conserved Lys which is expected to bind the lipoyl cofactor.</text>
</comment>
<name>GCSH4_DICDI</name>
<accession>Q54JU1</accession>
<dbReference type="EMBL" id="AAFI02000104">
    <property type="protein sequence ID" value="EAL63544.1"/>
    <property type="molecule type" value="Genomic_DNA"/>
</dbReference>
<dbReference type="RefSeq" id="XP_637061.1">
    <property type="nucleotide sequence ID" value="XM_631969.1"/>
</dbReference>
<dbReference type="SMR" id="Q54JU1"/>
<dbReference type="FunCoup" id="Q54JU1">
    <property type="interactions" value="795"/>
</dbReference>
<dbReference type="STRING" id="44689.Q54JU1"/>
<dbReference type="PaxDb" id="44689-DDB0231219"/>
<dbReference type="EnsemblProtists" id="EAL63544">
    <property type="protein sequence ID" value="EAL63544"/>
    <property type="gene ID" value="DDB_G0287795"/>
</dbReference>
<dbReference type="GeneID" id="8626315"/>
<dbReference type="KEGG" id="ddi:DDB_G0287795"/>
<dbReference type="dictyBase" id="DDB_G0287795">
    <property type="gene designation" value="gcvH4"/>
</dbReference>
<dbReference type="VEuPathDB" id="AmoebaDB:DDB_G0287795"/>
<dbReference type="eggNOG" id="KOG3373">
    <property type="taxonomic scope" value="Eukaryota"/>
</dbReference>
<dbReference type="HOGENOM" id="CLU_1317542_0_0_1"/>
<dbReference type="InParanoid" id="Q54JU1"/>
<dbReference type="OMA" id="YAHYCEN"/>
<dbReference type="PRO" id="PR:Q54JU1"/>
<dbReference type="Proteomes" id="UP000002195">
    <property type="component" value="Chromosome 5"/>
</dbReference>
<dbReference type="GO" id="GO:0005960">
    <property type="term" value="C:glycine cleavage complex"/>
    <property type="evidence" value="ECO:0000318"/>
    <property type="project" value="GO_Central"/>
</dbReference>
<dbReference type="GO" id="GO:0005739">
    <property type="term" value="C:mitochondrion"/>
    <property type="evidence" value="ECO:0000318"/>
    <property type="project" value="GO_Central"/>
</dbReference>
<dbReference type="GO" id="GO:0019464">
    <property type="term" value="P:glycine decarboxylation via glycine cleavage system"/>
    <property type="evidence" value="ECO:0000318"/>
    <property type="project" value="GO_Central"/>
</dbReference>
<dbReference type="Gene3D" id="2.40.50.100">
    <property type="match status" value="1"/>
</dbReference>
<dbReference type="InterPro" id="IPR000089">
    <property type="entry name" value="Biotin_lipoyl"/>
</dbReference>
<dbReference type="InterPro" id="IPR002930">
    <property type="entry name" value="GCV_H"/>
</dbReference>
<dbReference type="InterPro" id="IPR033753">
    <property type="entry name" value="GCV_H/Fam206"/>
</dbReference>
<dbReference type="InterPro" id="IPR011053">
    <property type="entry name" value="Single_hybrid_motif"/>
</dbReference>
<dbReference type="PANTHER" id="PTHR11715">
    <property type="entry name" value="GLYCINE CLEAVAGE SYSTEM H PROTEIN"/>
    <property type="match status" value="1"/>
</dbReference>
<dbReference type="PANTHER" id="PTHR11715:SF8">
    <property type="entry name" value="GLYCINE CLEAVAGE SYSTEM H-LIKE PROTEIN GCVH4"/>
    <property type="match status" value="1"/>
</dbReference>
<dbReference type="Pfam" id="PF01597">
    <property type="entry name" value="GCV_H"/>
    <property type="match status" value="1"/>
</dbReference>
<dbReference type="SUPFAM" id="SSF51230">
    <property type="entry name" value="Single hybrid motif"/>
    <property type="match status" value="1"/>
</dbReference>
<dbReference type="PROSITE" id="PS50968">
    <property type="entry name" value="BIOTINYL_LIPOYL"/>
    <property type="match status" value="1"/>
</dbReference>
<evidence type="ECO:0000255" key="1">
    <source>
        <dbReference type="PROSITE-ProRule" id="PRU01066"/>
    </source>
</evidence>
<evidence type="ECO:0000256" key="2">
    <source>
        <dbReference type="SAM" id="MobiDB-lite"/>
    </source>
</evidence>
<evidence type="ECO:0000305" key="3"/>
<protein>
    <recommendedName>
        <fullName>Glycine cleavage system H-like protein gcvH4</fullName>
    </recommendedName>
</protein>
<keyword id="KW-1185">Reference proteome</keyword>
<feature type="chain" id="PRO_0000328550" description="Glycine cleavage system H-like protein gcvH4">
    <location>
        <begin position="1"/>
        <end position="209"/>
    </location>
</feature>
<feature type="domain" description="Lipoyl-binding" evidence="1">
    <location>
        <begin position="73"/>
        <end position="159"/>
    </location>
</feature>
<feature type="region of interest" description="Disordered" evidence="2">
    <location>
        <begin position="35"/>
        <end position="56"/>
    </location>
</feature>
<feature type="compositionally biased region" description="Low complexity" evidence="2">
    <location>
        <begin position="35"/>
        <end position="51"/>
    </location>
</feature>
<reference key="1">
    <citation type="journal article" date="2005" name="Nature">
        <title>The genome of the social amoeba Dictyostelium discoideum.</title>
        <authorList>
            <person name="Eichinger L."/>
            <person name="Pachebat J.A."/>
            <person name="Gloeckner G."/>
            <person name="Rajandream M.A."/>
            <person name="Sucgang R."/>
            <person name="Berriman M."/>
            <person name="Song J."/>
            <person name="Olsen R."/>
            <person name="Szafranski K."/>
            <person name="Xu Q."/>
            <person name="Tunggal B."/>
            <person name="Kummerfeld S."/>
            <person name="Madera M."/>
            <person name="Konfortov B.A."/>
            <person name="Rivero F."/>
            <person name="Bankier A.T."/>
            <person name="Lehmann R."/>
            <person name="Hamlin N."/>
            <person name="Davies R."/>
            <person name="Gaudet P."/>
            <person name="Fey P."/>
            <person name="Pilcher K."/>
            <person name="Chen G."/>
            <person name="Saunders D."/>
            <person name="Sodergren E.J."/>
            <person name="Davis P."/>
            <person name="Kerhornou A."/>
            <person name="Nie X."/>
            <person name="Hall N."/>
            <person name="Anjard C."/>
            <person name="Hemphill L."/>
            <person name="Bason N."/>
            <person name="Farbrother P."/>
            <person name="Desany B."/>
            <person name="Just E."/>
            <person name="Morio T."/>
            <person name="Rost R."/>
            <person name="Churcher C.M."/>
            <person name="Cooper J."/>
            <person name="Haydock S."/>
            <person name="van Driessche N."/>
            <person name="Cronin A."/>
            <person name="Goodhead I."/>
            <person name="Muzny D.M."/>
            <person name="Mourier T."/>
            <person name="Pain A."/>
            <person name="Lu M."/>
            <person name="Harper D."/>
            <person name="Lindsay R."/>
            <person name="Hauser H."/>
            <person name="James K.D."/>
            <person name="Quiles M."/>
            <person name="Madan Babu M."/>
            <person name="Saito T."/>
            <person name="Buchrieser C."/>
            <person name="Wardroper A."/>
            <person name="Felder M."/>
            <person name="Thangavelu M."/>
            <person name="Johnson D."/>
            <person name="Knights A."/>
            <person name="Loulseged H."/>
            <person name="Mungall K.L."/>
            <person name="Oliver K."/>
            <person name="Price C."/>
            <person name="Quail M.A."/>
            <person name="Urushihara H."/>
            <person name="Hernandez J."/>
            <person name="Rabbinowitsch E."/>
            <person name="Steffen D."/>
            <person name="Sanders M."/>
            <person name="Ma J."/>
            <person name="Kohara Y."/>
            <person name="Sharp S."/>
            <person name="Simmonds M.N."/>
            <person name="Spiegler S."/>
            <person name="Tivey A."/>
            <person name="Sugano S."/>
            <person name="White B."/>
            <person name="Walker D."/>
            <person name="Woodward J.R."/>
            <person name="Winckler T."/>
            <person name="Tanaka Y."/>
            <person name="Shaulsky G."/>
            <person name="Schleicher M."/>
            <person name="Weinstock G.M."/>
            <person name="Rosenthal A."/>
            <person name="Cox E.C."/>
            <person name="Chisholm R.L."/>
            <person name="Gibbs R.A."/>
            <person name="Loomis W.F."/>
            <person name="Platzer M."/>
            <person name="Kay R.R."/>
            <person name="Williams J.G."/>
            <person name="Dear P.H."/>
            <person name="Noegel A.A."/>
            <person name="Barrell B.G."/>
            <person name="Kuspa A."/>
        </authorList>
    </citation>
    <scope>NUCLEOTIDE SEQUENCE [LARGE SCALE GENOMIC DNA]</scope>
    <source>
        <strain>AX4</strain>
    </source>
</reference>
<proteinExistence type="inferred from homology"/>
<organism>
    <name type="scientific">Dictyostelium discoideum</name>
    <name type="common">Social amoeba</name>
    <dbReference type="NCBI Taxonomy" id="44689"/>
    <lineage>
        <taxon>Eukaryota</taxon>
        <taxon>Amoebozoa</taxon>
        <taxon>Evosea</taxon>
        <taxon>Eumycetozoa</taxon>
        <taxon>Dictyostelia</taxon>
        <taxon>Dictyosteliales</taxon>
        <taxon>Dictyosteliaceae</taxon>
        <taxon>Dictyostelium</taxon>
    </lineage>
</organism>
<sequence length="209" mass="24667">MNKIISNKIINNNIIFRNNFNNLFFIRNFINNKNNNNNNNNNNNNNNNNNNRNKKLKYSPNHQWIKISENKDFATIGITNYVSDIVNNEFNKILKIKLPKINDKIRLNQPFLSIWTKEEENIQFKSPLSGIVSKVNNKFNNQQTTTISTKTTTTTTKIKPKLPLKSNSLFFNNDQDSWTIELKINEPFQTNHLMTEEEYAHYCENTDYK</sequence>